<comment type="function">
    <text evidence="1">Involved in DNA repair and RecF pathway recombination.</text>
</comment>
<comment type="similarity">
    <text evidence="1">Belongs to the RecO family.</text>
</comment>
<name>RECO_LEPBA</name>
<keyword id="KW-0227">DNA damage</keyword>
<keyword id="KW-0233">DNA recombination</keyword>
<keyword id="KW-0234">DNA repair</keyword>
<sequence>MAIRKEIGIIIQSKDIGESDRLISLAGETQVRMNFISKGIRKSKRRAIISTELGCLVEVDYYDQVEKDWKSTKEIHLIKRYDELKKDYVGTLFVLYLTELTSQLYPDGENHPFLYQLLSGSLEVSNENGFRKEILPFFKLRALTHMGHFPTEFYCHTCGEEVLTKAKAYFSVDSREFLCSDCHPITKDHLPVLKLFHTMLSKKFSNVLVIFPKEAEYREGDMILNQFLRSLLGRELKSYFEFYKTIGDL</sequence>
<proteinExistence type="inferred from homology"/>
<organism>
    <name type="scientific">Leptospira biflexa serovar Patoc (strain Patoc 1 / Ames)</name>
    <dbReference type="NCBI Taxonomy" id="355278"/>
    <lineage>
        <taxon>Bacteria</taxon>
        <taxon>Pseudomonadati</taxon>
        <taxon>Spirochaetota</taxon>
        <taxon>Spirochaetia</taxon>
        <taxon>Leptospirales</taxon>
        <taxon>Leptospiraceae</taxon>
        <taxon>Leptospira</taxon>
    </lineage>
</organism>
<feature type="chain" id="PRO_1000193390" description="DNA repair protein RecO">
    <location>
        <begin position="1"/>
        <end position="249"/>
    </location>
</feature>
<protein>
    <recommendedName>
        <fullName evidence="1">DNA repair protein RecO</fullName>
    </recommendedName>
    <alternativeName>
        <fullName evidence="1">Recombination protein O</fullName>
    </alternativeName>
</protein>
<accession>B0SB31</accession>
<gene>
    <name evidence="1" type="primary">recO</name>
    <name type="ordered locus">LBF_2037</name>
</gene>
<dbReference type="EMBL" id="CP000777">
    <property type="protein sequence ID" value="ABZ94537.1"/>
    <property type="molecule type" value="Genomic_DNA"/>
</dbReference>
<dbReference type="RefSeq" id="WP_012389063.1">
    <property type="nucleotide sequence ID" value="NC_010842.1"/>
</dbReference>
<dbReference type="SMR" id="B0SB31"/>
<dbReference type="KEGG" id="lbf:LBF_2037"/>
<dbReference type="HOGENOM" id="CLU_1068729_0_0_12"/>
<dbReference type="GO" id="GO:0043590">
    <property type="term" value="C:bacterial nucleoid"/>
    <property type="evidence" value="ECO:0007669"/>
    <property type="project" value="TreeGrafter"/>
</dbReference>
<dbReference type="GO" id="GO:0006310">
    <property type="term" value="P:DNA recombination"/>
    <property type="evidence" value="ECO:0007669"/>
    <property type="project" value="UniProtKB-UniRule"/>
</dbReference>
<dbReference type="GO" id="GO:0006302">
    <property type="term" value="P:double-strand break repair"/>
    <property type="evidence" value="ECO:0007669"/>
    <property type="project" value="TreeGrafter"/>
</dbReference>
<dbReference type="Gene3D" id="2.40.50.140">
    <property type="entry name" value="Nucleic acid-binding proteins"/>
    <property type="match status" value="1"/>
</dbReference>
<dbReference type="Gene3D" id="1.20.1440.120">
    <property type="entry name" value="Recombination protein O, C-terminal domain"/>
    <property type="match status" value="1"/>
</dbReference>
<dbReference type="HAMAP" id="MF_00201">
    <property type="entry name" value="RecO"/>
    <property type="match status" value="1"/>
</dbReference>
<dbReference type="InterPro" id="IPR037278">
    <property type="entry name" value="ARFGAP/RecO"/>
</dbReference>
<dbReference type="InterPro" id="IPR022572">
    <property type="entry name" value="DNA_rep/recomb_RecO_N"/>
</dbReference>
<dbReference type="InterPro" id="IPR012340">
    <property type="entry name" value="NA-bd_OB-fold"/>
</dbReference>
<dbReference type="InterPro" id="IPR003717">
    <property type="entry name" value="RecO"/>
</dbReference>
<dbReference type="InterPro" id="IPR042242">
    <property type="entry name" value="RecO_C"/>
</dbReference>
<dbReference type="NCBIfam" id="TIGR00613">
    <property type="entry name" value="reco"/>
    <property type="match status" value="1"/>
</dbReference>
<dbReference type="PANTHER" id="PTHR33991">
    <property type="entry name" value="DNA REPAIR PROTEIN RECO"/>
    <property type="match status" value="1"/>
</dbReference>
<dbReference type="PANTHER" id="PTHR33991:SF1">
    <property type="entry name" value="DNA REPAIR PROTEIN RECO"/>
    <property type="match status" value="1"/>
</dbReference>
<dbReference type="Pfam" id="PF02565">
    <property type="entry name" value="RecO_C"/>
    <property type="match status" value="1"/>
</dbReference>
<dbReference type="Pfam" id="PF11967">
    <property type="entry name" value="RecO_N"/>
    <property type="match status" value="1"/>
</dbReference>
<dbReference type="SUPFAM" id="SSF57863">
    <property type="entry name" value="ArfGap/RecO-like zinc finger"/>
    <property type="match status" value="1"/>
</dbReference>
<evidence type="ECO:0000255" key="1">
    <source>
        <dbReference type="HAMAP-Rule" id="MF_00201"/>
    </source>
</evidence>
<reference key="1">
    <citation type="journal article" date="2008" name="PLoS ONE">
        <title>Genome sequence of the saprophyte Leptospira biflexa provides insights into the evolution of Leptospira and the pathogenesis of leptospirosis.</title>
        <authorList>
            <person name="Picardeau M."/>
            <person name="Bulach D.M."/>
            <person name="Bouchier C."/>
            <person name="Zuerner R.L."/>
            <person name="Zidane N."/>
            <person name="Wilson P.J."/>
            <person name="Creno S."/>
            <person name="Kuczek E.S."/>
            <person name="Bommezzadri S."/>
            <person name="Davis J.C."/>
            <person name="McGrath A."/>
            <person name="Johnson M.J."/>
            <person name="Boursaux-Eude C."/>
            <person name="Seemann T."/>
            <person name="Rouy Z."/>
            <person name="Coppel R.L."/>
            <person name="Rood J.I."/>
            <person name="Lajus A."/>
            <person name="Davies J.K."/>
            <person name="Medigue C."/>
            <person name="Adler B."/>
        </authorList>
    </citation>
    <scope>NUCLEOTIDE SEQUENCE [LARGE SCALE GENOMIC DNA]</scope>
    <source>
        <strain>Patoc 1 / Ames</strain>
    </source>
</reference>